<keyword id="KW-0002">3D-structure</keyword>
<keyword id="KW-0025">Alternative splicing</keyword>
<keyword id="KW-0106">Calcium</keyword>
<keyword id="KW-0130">Cell adhesion</keyword>
<keyword id="KW-0209">Deafness</keyword>
<keyword id="KW-0225">Disease variant</keyword>
<keyword id="KW-1015">Disulfide bond</keyword>
<keyword id="KW-0245">EGF-like domain</keyword>
<keyword id="KW-0325">Glycoprotein</keyword>
<keyword id="KW-0991">Intellectual disability</keyword>
<keyword id="KW-0472">Membrane</keyword>
<keyword id="KW-0597">Phosphoprotein</keyword>
<keyword id="KW-1267">Proteomics identification</keyword>
<keyword id="KW-1185">Reference proteome</keyword>
<keyword id="KW-0677">Repeat</keyword>
<keyword id="KW-0732">Signal</keyword>
<keyword id="KW-0812">Transmembrane</keyword>
<keyword id="KW-1133">Transmembrane helix</keyword>
<reference key="1">
    <citation type="journal article" date="2004" name="J. Mol. Biol.">
        <title>Identification of new human cadherin genes using a combination of protein motif search and gene finding methods.</title>
        <authorList>
            <person name="Hoeng J.C."/>
            <person name="Ivanov N.V."/>
            <person name="Hodor P."/>
            <person name="Xia M."/>
            <person name="Wei N."/>
            <person name="Blevins R."/>
            <person name="Gerhold D."/>
            <person name="Borodovsky M."/>
            <person name="Liu Y."/>
        </authorList>
    </citation>
    <scope>NUCLEOTIDE SEQUENCE [MRNA] (ISOFORM 2)</scope>
    <scope>TISSUE SPECIFICITY</scope>
</reference>
<reference key="2">
    <citation type="journal article" date="2005" name="Nature">
        <title>Generation and annotation of the DNA sequences of human chromosomes 2 and 4.</title>
        <authorList>
            <person name="Hillier L.W."/>
            <person name="Graves T.A."/>
            <person name="Fulton R.S."/>
            <person name="Fulton L.A."/>
            <person name="Pepin K.H."/>
            <person name="Minx P."/>
            <person name="Wagner-McPherson C."/>
            <person name="Layman D."/>
            <person name="Wylie K."/>
            <person name="Sekhon M."/>
            <person name="Becker M.C."/>
            <person name="Fewell G.A."/>
            <person name="Delehaunty K.D."/>
            <person name="Miner T.L."/>
            <person name="Nash W.E."/>
            <person name="Kremitzki C."/>
            <person name="Oddy L."/>
            <person name="Du H."/>
            <person name="Sun H."/>
            <person name="Bradshaw-Cordum H."/>
            <person name="Ali J."/>
            <person name="Carter J."/>
            <person name="Cordes M."/>
            <person name="Harris A."/>
            <person name="Isak A."/>
            <person name="van Brunt A."/>
            <person name="Nguyen C."/>
            <person name="Du F."/>
            <person name="Courtney L."/>
            <person name="Kalicki J."/>
            <person name="Ozersky P."/>
            <person name="Abbott S."/>
            <person name="Armstrong J."/>
            <person name="Belter E.A."/>
            <person name="Caruso L."/>
            <person name="Cedroni M."/>
            <person name="Cotton M."/>
            <person name="Davidson T."/>
            <person name="Desai A."/>
            <person name="Elliott G."/>
            <person name="Erb T."/>
            <person name="Fronick C."/>
            <person name="Gaige T."/>
            <person name="Haakenson W."/>
            <person name="Haglund K."/>
            <person name="Holmes A."/>
            <person name="Harkins R."/>
            <person name="Kim K."/>
            <person name="Kruchowski S.S."/>
            <person name="Strong C.M."/>
            <person name="Grewal N."/>
            <person name="Goyea E."/>
            <person name="Hou S."/>
            <person name="Levy A."/>
            <person name="Martinka S."/>
            <person name="Mead K."/>
            <person name="McLellan M.D."/>
            <person name="Meyer R."/>
            <person name="Randall-Maher J."/>
            <person name="Tomlinson C."/>
            <person name="Dauphin-Kohlberg S."/>
            <person name="Kozlowicz-Reilly A."/>
            <person name="Shah N."/>
            <person name="Swearengen-Shahid S."/>
            <person name="Snider J."/>
            <person name="Strong J.T."/>
            <person name="Thompson J."/>
            <person name="Yoakum M."/>
            <person name="Leonard S."/>
            <person name="Pearman C."/>
            <person name="Trani L."/>
            <person name="Radionenko M."/>
            <person name="Waligorski J.E."/>
            <person name="Wang C."/>
            <person name="Rock S.M."/>
            <person name="Tin-Wollam A.-M."/>
            <person name="Maupin R."/>
            <person name="Latreille P."/>
            <person name="Wendl M.C."/>
            <person name="Yang S.-P."/>
            <person name="Pohl C."/>
            <person name="Wallis J.W."/>
            <person name="Spieth J."/>
            <person name="Bieri T.A."/>
            <person name="Berkowicz N."/>
            <person name="Nelson J.O."/>
            <person name="Osborne J."/>
            <person name="Ding L."/>
            <person name="Meyer R."/>
            <person name="Sabo A."/>
            <person name="Shotland Y."/>
            <person name="Sinha P."/>
            <person name="Wohldmann P.E."/>
            <person name="Cook L.L."/>
            <person name="Hickenbotham M.T."/>
            <person name="Eldred J."/>
            <person name="Williams D."/>
            <person name="Jones T.A."/>
            <person name="She X."/>
            <person name="Ciccarelli F.D."/>
            <person name="Izaurralde E."/>
            <person name="Taylor J."/>
            <person name="Schmutz J."/>
            <person name="Myers R.M."/>
            <person name="Cox D.R."/>
            <person name="Huang X."/>
            <person name="McPherson J.D."/>
            <person name="Mardis E.R."/>
            <person name="Clifton S.W."/>
            <person name="Warren W.C."/>
            <person name="Chinwalla A.T."/>
            <person name="Eddy S.R."/>
            <person name="Marra M.A."/>
            <person name="Ovcharenko I."/>
            <person name="Furey T.S."/>
            <person name="Miller W."/>
            <person name="Eichler E.E."/>
            <person name="Bork P."/>
            <person name="Suyama M."/>
            <person name="Torrents D."/>
            <person name="Waterston R.H."/>
            <person name="Wilson R.K."/>
        </authorList>
    </citation>
    <scope>NUCLEOTIDE SEQUENCE [LARGE SCALE GENOMIC DNA]</scope>
</reference>
<reference key="3">
    <citation type="journal article" date="2003" name="Cancer Lett.">
        <title>Neuroblastoma oligo-capping cDNA project: toward the understanding of the genesis and biology of neuroblastoma.</title>
        <authorList>
            <person name="Ohira M."/>
            <person name="Morohashi A."/>
            <person name="Nakamura Y."/>
            <person name="Isogai E."/>
            <person name="Furuya K."/>
            <person name="Hamano S."/>
            <person name="Machida T."/>
            <person name="Aoyama M."/>
            <person name="Fukumura M."/>
            <person name="Miyazaki K."/>
            <person name="Suzuki Y."/>
            <person name="Sugano S."/>
            <person name="Hirato J."/>
            <person name="Nakagawara A."/>
        </authorList>
    </citation>
    <scope>NUCLEOTIDE SEQUENCE [LARGE SCALE MRNA] OF 2709-3364 (ISOFORM 1)</scope>
    <source>
        <tissue>Neuroblastoma</tissue>
    </source>
</reference>
<reference key="4">
    <citation type="journal article" date="2004" name="Nat. Genet.">
        <title>Complete sequencing and characterization of 21,243 full-length human cDNAs.</title>
        <authorList>
            <person name="Ota T."/>
            <person name="Suzuki Y."/>
            <person name="Nishikawa T."/>
            <person name="Otsuki T."/>
            <person name="Sugiyama T."/>
            <person name="Irie R."/>
            <person name="Wakamatsu A."/>
            <person name="Hayashi K."/>
            <person name="Sato H."/>
            <person name="Nagai K."/>
            <person name="Kimura K."/>
            <person name="Makita H."/>
            <person name="Sekine M."/>
            <person name="Obayashi M."/>
            <person name="Nishi T."/>
            <person name="Shibahara T."/>
            <person name="Tanaka T."/>
            <person name="Ishii S."/>
            <person name="Yamamoto J."/>
            <person name="Saito K."/>
            <person name="Kawai Y."/>
            <person name="Isono Y."/>
            <person name="Nakamura Y."/>
            <person name="Nagahari K."/>
            <person name="Murakami K."/>
            <person name="Yasuda T."/>
            <person name="Iwayanagi T."/>
            <person name="Wagatsuma M."/>
            <person name="Shiratori A."/>
            <person name="Sudo H."/>
            <person name="Hosoiri T."/>
            <person name="Kaku Y."/>
            <person name="Kodaira H."/>
            <person name="Kondo H."/>
            <person name="Sugawara M."/>
            <person name="Takahashi M."/>
            <person name="Kanda K."/>
            <person name="Yokoi T."/>
            <person name="Furuya T."/>
            <person name="Kikkawa E."/>
            <person name="Omura Y."/>
            <person name="Abe K."/>
            <person name="Kamihara K."/>
            <person name="Katsuta N."/>
            <person name="Sato K."/>
            <person name="Tanikawa M."/>
            <person name="Yamazaki M."/>
            <person name="Ninomiya K."/>
            <person name="Ishibashi T."/>
            <person name="Yamashita H."/>
            <person name="Murakawa K."/>
            <person name="Fujimori K."/>
            <person name="Tanai H."/>
            <person name="Kimata M."/>
            <person name="Watanabe M."/>
            <person name="Hiraoka S."/>
            <person name="Chiba Y."/>
            <person name="Ishida S."/>
            <person name="Ono Y."/>
            <person name="Takiguchi S."/>
            <person name="Watanabe S."/>
            <person name="Yosida M."/>
            <person name="Hotuta T."/>
            <person name="Kusano J."/>
            <person name="Kanehori K."/>
            <person name="Takahashi-Fujii A."/>
            <person name="Hara H."/>
            <person name="Tanase T.-O."/>
            <person name="Nomura Y."/>
            <person name="Togiya S."/>
            <person name="Komai F."/>
            <person name="Hara R."/>
            <person name="Takeuchi K."/>
            <person name="Arita M."/>
            <person name="Imose N."/>
            <person name="Musashino K."/>
            <person name="Yuuki H."/>
            <person name="Oshima A."/>
            <person name="Sasaki N."/>
            <person name="Aotsuka S."/>
            <person name="Yoshikawa Y."/>
            <person name="Matsunawa H."/>
            <person name="Ichihara T."/>
            <person name="Shiohata N."/>
            <person name="Sano S."/>
            <person name="Moriya S."/>
            <person name="Momiyama H."/>
            <person name="Satoh N."/>
            <person name="Takami S."/>
            <person name="Terashima Y."/>
            <person name="Suzuki O."/>
            <person name="Nakagawa S."/>
            <person name="Senoh A."/>
            <person name="Mizoguchi H."/>
            <person name="Goto Y."/>
            <person name="Shimizu F."/>
            <person name="Wakebe H."/>
            <person name="Hishigaki H."/>
            <person name="Watanabe T."/>
            <person name="Sugiyama A."/>
            <person name="Takemoto M."/>
            <person name="Kawakami B."/>
            <person name="Yamazaki M."/>
            <person name="Watanabe K."/>
            <person name="Kumagai A."/>
            <person name="Itakura S."/>
            <person name="Fukuzumi Y."/>
            <person name="Fujimori Y."/>
            <person name="Komiyama M."/>
            <person name="Tashiro H."/>
            <person name="Tanigami A."/>
            <person name="Fujiwara T."/>
            <person name="Ono T."/>
            <person name="Yamada K."/>
            <person name="Fujii Y."/>
            <person name="Ozaki K."/>
            <person name="Hirao M."/>
            <person name="Ohmori Y."/>
            <person name="Kawabata A."/>
            <person name="Hikiji T."/>
            <person name="Kobatake N."/>
            <person name="Inagaki H."/>
            <person name="Ikema Y."/>
            <person name="Okamoto S."/>
            <person name="Okitani R."/>
            <person name="Kawakami T."/>
            <person name="Noguchi S."/>
            <person name="Itoh T."/>
            <person name="Shigeta K."/>
            <person name="Senba T."/>
            <person name="Matsumura K."/>
            <person name="Nakajima Y."/>
            <person name="Mizuno T."/>
            <person name="Morinaga M."/>
            <person name="Sasaki M."/>
            <person name="Togashi T."/>
            <person name="Oyama M."/>
            <person name="Hata H."/>
            <person name="Watanabe M."/>
            <person name="Komatsu T."/>
            <person name="Mizushima-Sugano J."/>
            <person name="Satoh T."/>
            <person name="Shirai Y."/>
            <person name="Takahashi Y."/>
            <person name="Nakagawa K."/>
            <person name="Okumura K."/>
            <person name="Nagase T."/>
            <person name="Nomura N."/>
            <person name="Kikuchi H."/>
            <person name="Masuho Y."/>
            <person name="Yamashita R."/>
            <person name="Nakai K."/>
            <person name="Yada T."/>
            <person name="Nakamura Y."/>
            <person name="Ohara O."/>
            <person name="Isogai T."/>
            <person name="Sugano S."/>
        </authorList>
    </citation>
    <scope>NUCLEOTIDE SEQUENCE [LARGE SCALE MRNA] OF 3819-4981 (ISOFORM 3)</scope>
    <scope>VARIANTS ASN-3873 AND SER-4972</scope>
    <source>
        <tissue>Brain</tissue>
    </source>
</reference>
<reference key="5">
    <citation type="journal article" date="2007" name="BMC Genomics">
        <title>The full-ORF clone resource of the German cDNA consortium.</title>
        <authorList>
            <person name="Bechtel S."/>
            <person name="Rosenfelder H."/>
            <person name="Duda A."/>
            <person name="Schmidt C.P."/>
            <person name="Ernst U."/>
            <person name="Wellenreuther R."/>
            <person name="Mehrle A."/>
            <person name="Schuster C."/>
            <person name="Bahr A."/>
            <person name="Bloecker H."/>
            <person name="Heubner D."/>
            <person name="Hoerlein A."/>
            <person name="Michel G."/>
            <person name="Wedler H."/>
            <person name="Koehrer K."/>
            <person name="Ottenwaelder B."/>
            <person name="Poustka A."/>
            <person name="Wiemann S."/>
            <person name="Schupp I."/>
        </authorList>
    </citation>
    <scope>NUCLEOTIDE SEQUENCE [LARGE SCALE MRNA] OF 4859-4981</scope>
    <source>
        <tissue>Lymph node</tissue>
    </source>
</reference>
<reference key="6">
    <citation type="journal article" date="2006" name="Int. J. Mol. Med.">
        <title>Comparative integromics on FAT1, FAT2, FAT3 and FAT4.</title>
        <authorList>
            <person name="Katoh Y."/>
            <person name="Katoh M."/>
        </authorList>
    </citation>
    <scope>IDENTIFICATION</scope>
    <scope>TISSUE SPECIFICITY</scope>
</reference>
<reference key="7">
    <citation type="journal article" date="2013" name="Nat. Genet.">
        <title>Mutations in genes encoding the cadherin receptor-ligand pair DCHS1 and FAT4 disrupt cerebral cortical development.</title>
        <authorList>
            <person name="Cappello S."/>
            <person name="Gray M.J."/>
            <person name="Badouel C."/>
            <person name="Lange S."/>
            <person name="Einsiedler M."/>
            <person name="Srour M."/>
            <person name="Chitayat D."/>
            <person name="Hamdan F.F."/>
            <person name="Jenkins Z.A."/>
            <person name="Morgan T."/>
            <person name="Preitner N."/>
            <person name="Uster T."/>
            <person name="Thomas J."/>
            <person name="Shannon P."/>
            <person name="Morrison V."/>
            <person name="Di Donato N."/>
            <person name="Van Maldergem L."/>
            <person name="Neuhann T."/>
            <person name="Newbury-Ecob R."/>
            <person name="Swinkells M."/>
            <person name="Terhal P."/>
            <person name="Wilson L.C."/>
            <person name="Zwijnenburg P.J."/>
            <person name="Sutherland-Smith A.J."/>
            <person name="Black M.A."/>
            <person name="Markie D."/>
            <person name="Michaud J.L."/>
            <person name="Simpson M.A."/>
            <person name="Mansour S."/>
            <person name="McNeill H."/>
            <person name="Goetz M."/>
            <person name="Robertson S.P."/>
        </authorList>
    </citation>
    <scope>DEVELOPMENTAL STAGE</scope>
    <scope>VARIANTS VMLDS2 LYS-2375; PHE-4159 AND TYR-4398</scope>
</reference>
<reference key="8">
    <citation type="journal article" date="2014" name="Hum. Genet.">
        <title>Hennekam syndrome can be caused by FAT4 mutations and be allelic to Van Maldergem syndrome.</title>
        <authorList>
            <person name="Alders M."/>
            <person name="Al-Gazali L."/>
            <person name="Cordeiro I."/>
            <person name="Dallapiccola B."/>
            <person name="Garavelli L."/>
            <person name="Tuysuz B."/>
            <person name="Salehi F."/>
            <person name="Haagmans M.A."/>
            <person name="Mook O.R."/>
            <person name="Majoie C.B."/>
            <person name="Mannens M.M."/>
            <person name="Hennekam R.C."/>
        </authorList>
    </citation>
    <scope>INVOLVEMENT IN HKLLS2</scope>
    <scope>VARIANTS HKLLS2 LEU-475; GLN-486; LYS-2375 AND PHE-4282</scope>
</reference>
<gene>
    <name type="primary">FAT4</name>
    <name type="synonym">CDHF14</name>
    <name type="synonym">FATJ</name>
    <name type="ORF">Nbla00548</name>
</gene>
<name>FAT4_HUMAN</name>
<accession>Q6V0I7</accession>
<accession>A8K5Z6</accession>
<accession>B5MDG4</accession>
<accession>Q3LIA6</accession>
<accession>Q8TCK7</accession>
<accession>Q9H5T6</accession>
<sequence length="4981" mass="542687">MDLAPDRATGRPWLPLHTLSVSQLLRVFWLLSLLPGQAWVHGAEPRQVFQVLEEQPPGTLVGTIQTRPGFTYRLSESHALFAINSSTGALYTTSTIDRESLPSDVINLVVLSSAPTYPTEVRVLVRDLNDNAPVFPDPSIVVTFKEDSSSGRQVILDTATDSDIGSNGVDHRSYRIIRGNEAGRFRLDITLNPSGEGAFLHLVSKGGLDREVTPQYQLLVEVEDKGEPKRRGYLQVNVTVQDINDNPPVFGSSHYQAGVPEDAVVGSSVLQVAAADADEGTNADIRYRLQDEGTPFQMDPETGLITVREPLDFEARRQYSLTVQAMDRGVPSLTGRAEALIQLLDVNDNDPVVKFRYFPATSRYASVDENAQVGTVVALLTVTDADSPAANGNISVQILGGNEQRHFEVQSSKVPNLSLIKVASALDRERIPSYNLTVSVSDNYGAPPGAAVQARSSVASLVIFVNDINDHPPVFSQQVYRVNLSEEAPPGSYVSGISATDGDSGLNANLRYSIVSGNGLGWFHISEHSGLVTTGSSGGLDRELASQIVLNISARDQGVHPKVSYAQLVVTLLDVNDEKPVFSQPEGYDVSVVENAPTGTELLMLRATDGDLGDNGTVRFSLQEAETDRRSFRLDPVSGRLSTISSLDREEQAFYSLLVLATDLGSPPQSSMARINVSLLDINDNSPVFYPVQYFAHIKENEPGGSYITTVSATDPDLGTNGTVKYSISAGDRSRFQVNAQSGVISTRMALDREEKTAYQLQIVATDGGNLQSPNQAIVTITVLDTQDNPPVFSQVAYSFVVFENVALGYHVGSVSASTMDLNSNISYLITTGDQKGMFAINQVTGQLTTANVIDREEQSFYQLKVVASGGTVTGDTMVNITVKDLNDNSPHFLQAIESVNVVENWQAGHSIFQAKAVDPDEGVNGMVLYSLKQNPKNLFAINEKNGTISLLGPLDVHAGSYQIEILASDMGVPQLSSSVILTVYVHDVNDNSPVFDQLSYEVTLSESEPVNSRFFKVQASDKDSGANGEIAYTIAEGNTGDAFGIFPDGQLYIKSELDRELQDRYVLMVVASDRAVEPLSATVNVTVILEDVNDNRPLFNSTNYTFYFEEEQRAGSFVGKVSAVDKDFGPNGEVRYSFEMVQPDFELHAISGEITNTHQFDRESLMRRRGTAVFSFTVIATDQGIPQPLKDQATVHVYMKDINDNAPKFLKDFYQATISESAANLTQVLRVSASDVDEGNNGLIHYSIIKGNEERQFAIDSTSGQVTLIGKLDYEATPAYSLVIQAVDSGTIPLNSTCTLNIDILDENDNTPSFPKSTLFVDVLENMRIGELVSSVTATDSDSGDNADLYYSITGTNNHGTFSISPNTGSIFLAKKLDFETQSLYKLNITAKDQGRPPRSSTMSVVIHVRDFNDNPPSFPPGDIFKSIVENIPIGTSVISVTAHDPDADINGQLSYTIIQQMPRGNHFTIDEVKGTIYTNAEIDREFANLFELTVKANDQAVPIETRRYALKNVTILVTDLNDNVPMFISQNALAADPSAVIGSVLTTIMAADPDEGANGEIEYEIINGDTDTFIVDRYSGDLRVASALVPSQLIYNLIVSATDLGPERRKSTTELTIILQGLDGPVFTQPKYITILKEGEPIGTNVISIEAASPRGSEAPVEYYIVSVRCEEKTVGRLFTIGRHTGIIQTAAILDREQGACLYLVDVYAIEKSTAFPRTQRAEVEITLQDINDNPPVFPTDMLDLTVEENIGDGSKIMQLTAMDADEGANALVTYTIISGADDSFRIDPESGDLIATRRLDRERRSKYSLLVRADDGLQSSDMRINITVSDVNDHTPKFSRPVYSFDIPEDTIPGSLVAAILATDDDSGVNGEITYIVNEDDEDGIFFLNPITGVFNLTRLLDYEVQQYYILTVRAEDGGGQFTTIRVYFNILDVNDNPPIFSLNSYSTSLMENLPVGSTVLVFNVTDADDGINSQLTYSIASGDSLGQFTVDKNGVLKVLKALDRESQSFYNLVVQVHDLPQIPASRFTSTAQVSIILLDVNDNPPTFLSPKLTYIPENTPIDTVVFKAQATDPDSGPNSYIEYTLLNPLGNKFSIGTIDGEVRLTGELDREEVSNYTLTVVATDKGQPSLSSSTEVVVMVLDINDNNPIFAQALYKVEINENTLTGTDIIQVFAADGDEGTNGQVRYGIVNGNTNQEFRIDSVTGAITVAKPLDREKTPTYHLTVQATDRGSTPRTDTSTVSIVLLDINDFVPVFELSPYSVNVPENLGTLPRTILQVVARDDDRGSNSKLSYVLFGGNEDNAFTLSASGELGVTQSLDRETKERFVLMITATDSGSPALTGTGTINVIVDDVNDNVPTFASKAYFTTIPEDAPTGTDVLLVNASDADASKNAVIRIIGGNSQFTINPSTGQIITSALLDRETKDNYTLVVVCSDAGSPEPLSSSTSVLVTVTDVNDNPPRFQHHPYVTHIPSPTLPGSFVFAVTVTDADIGPNSELHYSLSGRNSEKFHIDPLRGAIMAAGPLNGASEVTFSVHVKDGGSFPKTDSTTVTVRFVNKADFPKVRAKEQTFMFPENQPVSSLVTTITGSSLRGEPMSYYIASGNLGNTFQIDQLTGQVSISQPLDFEKIQKYVVWIEARDGGFPPFSSYEKLDITVLDVNDNAPIFKEDPFISEILENLSPRKILTVSAMDKDSGPNGQLDYEIVNGNMENSFSINHATGEIRSVRPLDREKVSHYVLTIKSSDKGSPSQSTSVKVMINILDENDNAPRFSQIFSAHVPENSPLGYTVTRVTTSDEDIGINAISRYSIMDASLPFTINPSTGDIVISRPLNREDTDRYRIRVSAHDSGWTVSTDVTIFVTDINDNAPRFSRTSYYLDCPELTEIGSKVTQVFATDPDEGSNGQVFYFIKSQSEYFRINATTGEIFNKQILKYQNVTGFSNVNINRHSFIVTSSDRGKPSLISETTVTINIVDSNDNAPQFLKSKYFTPVTKNVKVGTKLIRVTAIDDKDFGLNSEVEYFISNDNHLGKFKLDNDTGWISVASSLISDLNQNFFITVTAKDKGNPPLSSQATVHITVTEENYHTPEFSQSHMSATIPESHSIGSIVRTVSARDRDAAMNGLIKYSISSGNEEGIFAINSSTGILTLAKALDYELCQKHEMTISAIDGGWVARTGYCSVTVNVIDVNDNSPVFLSDDYFPTVLENAPSGTTVIHLNATDADSGTNAVIAYTVQSSDSDLFVIDPNTGVITTQGFLDFETKQSYHLTVKAFNVPDEERCSFATVNIQLKGTNEYVPRFVSKLYYFEISEAAPKGTIVGEVFASDRDLGTDGEVHYLIFGNSRKKGFQINKKTGQIYVSGILDREKEERVSLKVLAKNFGSIRGADIDEVTVNVTVLDANDPPIFTLNIYSVQISEGVPIGTHVTFVSAFDSDSIPSWSRFSYFIGSGNENGAFSINPQTGQITVTAELDRETLPIYNLSVLAVDSGTPSATGSASLLVTLEDINDNGPMLTVSEGEVMENKRPGTLVMTLQSTDPDLPPNQGPFTYYLLSTGPATSYFSLSTAGVLSTTREIDREQIADFYLSVVTKDSGVPQMSSTGTVHITVIDQNDNPSQSRTVEIFVNYYGNLFPGGILGSVKPQDPDVLDSFHCSLTSGVTSLFSIPGGTCDLNSQPRSTDGTFDLTVLSNDGVHSTVTSNIRVFFAGFSNATVDNSILLRLGVPTVKDFLTNHYLHFLRIASSQLTGLGTAVQLYSAYEENNRTFLLAAVKRNHNQYVNPSGVATFFESIKEILLRQSGVKVESVDHDSCVHGPCQNGGSCLRRLAVSSVLKSRESLPVIIVANEPLQPFLCKCLPGYAGSWCEIDIDECLPSPCHSGGTCHNLVGGFSCSCPDGFTGRACERDINECLQSPCKNGAICQNFPGSFNCVCKTGYTGKMCESSVNYCECNPCFNGGSCQSGVDSYYCHCPFGVFGKHCELNSYGFEELSYMEFPSLDPNNNYIYVKFATIKSHALLLYNYDNQTGDRAEFLALEIAEERLRFSYNLGSGTYKLTTMKKVSDGHFHTVIARRAGMAASLTVDSCSENQEPGYCTVSNVAVSDDWTLDVQPNRVTVGGIRSLEPILQRRGHVESHDFVGCIMEFAVNGRPLEPSQALAAQGILDQCPRLEGACTRSPCQHGGTCMDYWSWQQCHCKEGLTGKYCEKSVTPDTALSLEGKGRLDYHMSQNEKREYLLRQSLRGAMLEPFGVNSLEVKFRTRSENGVLIHIQESSNYTTVKIKNGKVYFTSDAGIAGKVERNIPEVYVADGHWHTFLIGKNGTATVLSVDRIYNRDIIHPTQDFGGLDVLTISLGGIPPNQAHRDAQTAGFDGCIASMWYGGESLPFSGKHSLASISKTDPSVKIGCRGPNICASNPCWGDLLCINQWYAYRCVPPGDCASHPCQNGGSCEPGLHSGFTCSCPDSHTGRTCEMVVACLGVLCPQGKVCKAGSPAGHVCVLSQGPEEISLPLWAVPAIVGSCATVLALLVLSLILCNQCRGKKAKNPKEEKKPKEKKKKGSENVAFDDPDNIPPYGDDMTVRKQPEGNPKPDIIERENPYLIYDETDIPHNSETIPSAPLASPEQEIEHYDIDNASSIAPSDADIIQHYKQFRSHTPKFSIQRHSPLGFARQSPMPLGASSLTYQPSYGQGLRTSSLSHSACPTPNPLSRHSPAPFSKSSTFYRNSPARELHLPIRDGNTLEMHGDTCQPGIFNYATRLGRRSKSPQAMASHGSRPGSRLKQPIGQIPLESSPPVGLSIEEVERLNTPRPRNPSICSADHGRSSSEEDCRRPLSRTRNPADGIPAPESSSDSDSHESFTCSEMEYDREKPMVYTSRMPKLSQVNESDADDEDNYGARLKPRRYHGRRAEGGPVGTQAAAPGTADNTLPMKLGQQAGTFNWDNLLNWGPGFGHYVDVFKDLASLPEKAAANEEGKAGTTKPVPKDGEAEQYV</sequence>
<protein>
    <recommendedName>
        <fullName>Protocadherin Fat 4</fullName>
        <shortName>hFat4</shortName>
    </recommendedName>
    <alternativeName>
        <fullName>Cadherin family member 14</fullName>
    </alternativeName>
    <alternativeName>
        <fullName>FAT tumor suppressor homolog 4</fullName>
    </alternativeName>
    <alternativeName>
        <fullName>Fat-like cadherin protein FAT-J</fullName>
    </alternativeName>
</protein>
<comment type="function">
    <text evidence="1">Cadherins are calcium-dependent cell adhesion proteins. FAT4 plays a role in the maintenance of planar cell polarity as well as in inhibition of YAP1-mediated neuroprogenitor cell proliferation and differentiation (By similarity).</text>
</comment>
<comment type="subunit">
    <text evidence="1">Heterophilic interaction with DCHS1; this interaction affects their respective protein levels. Interacts (via cytoplasmic domain) with MPDZ. Forms a complex with PALS1 and MPDZ.</text>
</comment>
<comment type="interaction">
    <interactant intactId="EBI-948985">
        <id>Q6V0I7</id>
    </interactant>
    <interactant intactId="EBI-4398527">
        <id>Q9H2K2</id>
        <label>TNKS2</label>
    </interactant>
    <organismsDiffer>false</organismsDiffer>
    <experiments>2</experiments>
</comment>
<comment type="subcellular location">
    <subcellularLocation>
        <location evidence="15">Membrane</location>
        <topology evidence="15">Single-pass type I membrane protein</topology>
    </subcellularLocation>
    <text evidence="1">In the kidney, localizes to primary cilia.</text>
</comment>
<comment type="alternative products">
    <event type="alternative splicing"/>
    <isoform>
        <id>Q6V0I7-1</id>
        <name>1</name>
        <sequence type="displayed"/>
    </isoform>
    <isoform>
        <id>Q6V0I7-2</id>
        <name>2</name>
        <sequence type="described" ref="VSP_032334 VSP_032335 VSP_032336 VSP_032337"/>
    </isoform>
    <isoform>
        <id>Q6V0I7-3</id>
        <name>3</name>
        <sequence type="described" ref="VSP_032338"/>
    </isoform>
</comment>
<comment type="tissue specificity">
    <text evidence="9 10">Widely expressed. Expressed in fetal brain, infant brain, brain tumor and colorectal cancer.</text>
</comment>
<comment type="developmental stage">
    <text evidence="11">In embryos at 9 weeks the strongest expression is detected in the apical neuroepithelium, with weaker staining being present in the subventricular zone and within the cortical plate.</text>
</comment>
<comment type="disease" evidence="11">
    <disease id="DI-03983">
        <name>Van Maldergem syndrome 2</name>
        <acronym>VMLDS2</acronym>
        <description>An autosomal recessive disorder characterized by intellectual disability, typical craniofacial features, auditory malformations resulting in hearing loss, and skeletal and limb malformations. Some patients have renal hypoplasia. Brain MRI typically shows periventricular nodular heterotopia.</description>
        <dbReference type="MIM" id="615546"/>
    </disease>
    <text>The disease is caused by variants affecting the gene represented in this entry.</text>
</comment>
<comment type="disease" evidence="12">
    <disease id="DI-04238">
        <name>Hennekam lymphangiectasia-lymphedema syndrome 2</name>
        <acronym>HKLLS2</acronym>
        <description>A form of Hennekam lymphangiectasia-lymphedema syndrome, a generalized lymph-vessels dysplasia characterized by intestinal lymphangiectasia with severe lymphedema of the limbs, genitalia and face. In addition, affected individuals have unusual facies and some manifest intellectual disability. HKLLS2 individuals have lymphangiectasia variably affecting the gut, pericardium, lungs, kidneys, and genitalia. Other features include camptodactyly and rare syndactyly. HKLLS2 inheritance is autosomal recessive.</description>
        <dbReference type="MIM" id="616006"/>
    </disease>
    <text>The disease is caused by variants affecting the gene represented in this entry.</text>
</comment>
<comment type="sequence caution" evidence="15">
    <conflict type="erroneous initiation">
        <sequence resource="EMBL-CDS" id="BAB15534"/>
    </conflict>
    <text>Truncated N-terminus.</text>
</comment>
<comment type="sequence caution" evidence="15">
    <conflict type="frameshift">
        <sequence resource="EMBL-CDS" id="BAB15534"/>
    </conflict>
</comment>
<comment type="sequence caution" evidence="15">
    <conflict type="erroneous initiation">
        <sequence resource="EMBL-CDS" id="BAF84150"/>
    </conflict>
</comment>
<proteinExistence type="evidence at protein level"/>
<evidence type="ECO:0000250" key="1"/>
<evidence type="ECO:0000250" key="2">
    <source>
        <dbReference type="UniProtKB" id="Q2PZL6"/>
    </source>
</evidence>
<evidence type="ECO:0000255" key="3"/>
<evidence type="ECO:0000255" key="4">
    <source>
        <dbReference type="PROSITE-ProRule" id="PRU00043"/>
    </source>
</evidence>
<evidence type="ECO:0000255" key="5">
    <source>
        <dbReference type="PROSITE-ProRule" id="PRU00076"/>
    </source>
</evidence>
<evidence type="ECO:0000255" key="6">
    <source>
        <dbReference type="PROSITE-ProRule" id="PRU00122"/>
    </source>
</evidence>
<evidence type="ECO:0000256" key="7">
    <source>
        <dbReference type="SAM" id="MobiDB-lite"/>
    </source>
</evidence>
<evidence type="ECO:0000269" key="8">
    <source>
    </source>
</evidence>
<evidence type="ECO:0000269" key="9">
    <source>
    </source>
</evidence>
<evidence type="ECO:0000269" key="10">
    <source>
    </source>
</evidence>
<evidence type="ECO:0000269" key="11">
    <source>
    </source>
</evidence>
<evidence type="ECO:0000269" key="12">
    <source>
    </source>
</evidence>
<evidence type="ECO:0000303" key="13">
    <source>
    </source>
</evidence>
<evidence type="ECO:0000303" key="14">
    <source>
    </source>
</evidence>
<evidence type="ECO:0000305" key="15"/>
<evidence type="ECO:0007829" key="16">
    <source>
        <dbReference type="PDB" id="8EGW"/>
    </source>
</evidence>
<feature type="signal peptide" evidence="3">
    <location>
        <begin position="1"/>
        <end position="38"/>
    </location>
</feature>
<feature type="chain" id="PRO_0000324637" description="Protocadherin Fat 4">
    <location>
        <begin position="39"/>
        <end position="4981"/>
    </location>
</feature>
<feature type="topological domain" description="Extracellular" evidence="3">
    <location>
        <begin position="39"/>
        <end position="4504"/>
    </location>
</feature>
<feature type="transmembrane region" description="Helical" evidence="3">
    <location>
        <begin position="4505"/>
        <end position="4525"/>
    </location>
</feature>
<feature type="topological domain" description="Cytoplasmic" evidence="3">
    <location>
        <begin position="4526"/>
        <end position="4981"/>
    </location>
</feature>
<feature type="domain" description="Cadherin 1" evidence="4">
    <location>
        <begin position="43"/>
        <end position="135"/>
    </location>
</feature>
<feature type="domain" description="Cadherin 2" evidence="4">
    <location>
        <begin position="136"/>
        <end position="250"/>
    </location>
</feature>
<feature type="domain" description="Cadherin 3" evidence="4">
    <location>
        <begin position="251"/>
        <end position="353"/>
    </location>
</feature>
<feature type="domain" description="Cadherin 4" evidence="4">
    <location>
        <begin position="359"/>
        <end position="475"/>
    </location>
</feature>
<feature type="domain" description="Cadherin 5" evidence="4">
    <location>
        <begin position="476"/>
        <end position="582"/>
    </location>
</feature>
<feature type="domain" description="Cadherin 6" evidence="4">
    <location>
        <begin position="584"/>
        <end position="689"/>
    </location>
</feature>
<feature type="domain" description="Cadherin 7" evidence="4">
    <location>
        <begin position="690"/>
        <end position="793"/>
    </location>
</feature>
<feature type="domain" description="Cadherin 8" evidence="4">
    <location>
        <begin position="794"/>
        <end position="893"/>
    </location>
</feature>
<feature type="domain" description="Cadherin 9" evidence="4">
    <location>
        <begin position="894"/>
        <end position="996"/>
    </location>
</feature>
<feature type="domain" description="Cadherin 10" evidence="4">
    <location>
        <begin position="997"/>
        <end position="1100"/>
    </location>
</feature>
<feature type="domain" description="Cadherin 11" evidence="4">
    <location>
        <begin position="1101"/>
        <end position="1210"/>
    </location>
</feature>
<feature type="domain" description="Cadherin 12" evidence="4">
    <location>
        <begin position="1211"/>
        <end position="1315"/>
    </location>
</feature>
<feature type="domain" description="Cadherin 13" evidence="4">
    <location>
        <begin position="1316"/>
        <end position="1420"/>
    </location>
</feature>
<feature type="domain" description="Cadherin 14" evidence="4">
    <location>
        <begin position="1421"/>
        <end position="1529"/>
    </location>
</feature>
<feature type="domain" description="Cadherin 15" evidence="4">
    <location>
        <begin position="1529"/>
        <end position="1629"/>
    </location>
</feature>
<feature type="domain" description="Cadherin 16" evidence="4">
    <location>
        <begin position="1630"/>
        <end position="1740"/>
    </location>
</feature>
<feature type="domain" description="Cadherin 17" evidence="4">
    <location>
        <begin position="1741"/>
        <end position="1841"/>
    </location>
</feature>
<feature type="domain" description="Cadherin 18" evidence="4">
    <location>
        <begin position="1842"/>
        <end position="1944"/>
    </location>
</feature>
<feature type="domain" description="Cadherin 19" evidence="4">
    <location>
        <begin position="1945"/>
        <end position="2051"/>
    </location>
</feature>
<feature type="domain" description="Cadherin 20" evidence="4">
    <location>
        <begin position="2051"/>
        <end position="2154"/>
    </location>
</feature>
<feature type="domain" description="Cadherin 21" evidence="4">
    <location>
        <begin position="2155"/>
        <end position="2259"/>
    </location>
</feature>
<feature type="domain" description="Cadherin 22" evidence="4">
    <location>
        <begin position="2260"/>
        <end position="2364"/>
    </location>
</feature>
<feature type="domain" description="Cadherin 23" evidence="4">
    <location>
        <begin position="2365"/>
        <end position="2466"/>
    </location>
</feature>
<feature type="domain" description="Cadherin 24" evidence="4">
    <location>
        <begin position="2467"/>
        <end position="2567"/>
    </location>
</feature>
<feature type="domain" description="Cadherin 25" evidence="4">
    <location>
        <begin position="2568"/>
        <end position="2669"/>
    </location>
</feature>
<feature type="domain" description="Cadherin 26" evidence="4">
    <location>
        <begin position="2670"/>
        <end position="2773"/>
    </location>
</feature>
<feature type="domain" description="Cadherin 27" evidence="4">
    <location>
        <begin position="2773"/>
        <end position="2872"/>
    </location>
</feature>
<feature type="domain" description="Cadherin 28" evidence="4">
    <location>
        <begin position="2873"/>
        <end position="2983"/>
    </location>
</feature>
<feature type="domain" description="Cadherin 29" evidence="4">
    <location>
        <begin position="2984"/>
        <end position="3089"/>
    </location>
</feature>
<feature type="domain" description="Cadherin 30" evidence="4">
    <location>
        <begin position="3090"/>
        <end position="3194"/>
    </location>
</feature>
<feature type="domain" description="Cadherin 31" evidence="4">
    <location>
        <begin position="3195"/>
        <end position="3298"/>
    </location>
</feature>
<feature type="domain" description="Cadherin 32" evidence="4">
    <location>
        <begin position="3299"/>
        <end position="3404"/>
    </location>
</feature>
<feature type="domain" description="Cadherin 33" evidence="4">
    <location>
        <begin position="3405"/>
        <end position="3510"/>
    </location>
</feature>
<feature type="domain" description="Cadherin 34" evidence="4">
    <location>
        <begin position="3509"/>
        <end position="3620"/>
    </location>
</feature>
<feature type="domain" description="EGF-like 1" evidence="5">
    <location>
        <begin position="3802"/>
        <end position="3860"/>
    </location>
</feature>
<feature type="domain" description="EGF-like 2; calcium-binding" evidence="5">
    <location>
        <begin position="3862"/>
        <end position="3898"/>
    </location>
</feature>
<feature type="domain" description="EGF-like 3; calcium-binding" evidence="5">
    <location>
        <begin position="3900"/>
        <end position="3936"/>
    </location>
</feature>
<feature type="domain" description="EGF-like 4" evidence="5">
    <location>
        <begin position="3938"/>
        <end position="3974"/>
    </location>
</feature>
<feature type="domain" description="Laminin G-like 1" evidence="6">
    <location>
        <begin position="3975"/>
        <end position="4159"/>
    </location>
</feature>
<feature type="domain" description="EGF-like 5" evidence="5">
    <location>
        <begin position="4162"/>
        <end position="4198"/>
    </location>
</feature>
<feature type="domain" description="Laminin G-like 2" evidence="6">
    <location>
        <begin position="4217"/>
        <end position="4398"/>
    </location>
</feature>
<feature type="domain" description="EGF-like 6" evidence="5">
    <location>
        <begin position="4426"/>
        <end position="4463"/>
    </location>
</feature>
<feature type="region of interest" description="Disordered" evidence="7">
    <location>
        <begin position="4534"/>
        <end position="4584"/>
    </location>
</feature>
<feature type="region of interest" description="Disordered" evidence="7">
    <location>
        <begin position="4680"/>
        <end position="4713"/>
    </location>
</feature>
<feature type="region of interest" description="Necessary and sufficient for interaction with MPDZ" evidence="1">
    <location>
        <begin position="4706"/>
        <end position="4795"/>
    </location>
</feature>
<feature type="region of interest" description="Disordered" evidence="7">
    <location>
        <begin position="4752"/>
        <end position="4856"/>
    </location>
</feature>
<feature type="region of interest" description="Disordered" evidence="7">
    <location>
        <begin position="4869"/>
        <end position="4911"/>
    </location>
</feature>
<feature type="region of interest" description="Disordered" evidence="7">
    <location>
        <begin position="4957"/>
        <end position="4981"/>
    </location>
</feature>
<feature type="compositionally biased region" description="Polar residues" evidence="7">
    <location>
        <begin position="4680"/>
        <end position="4699"/>
    </location>
</feature>
<feature type="compositionally biased region" description="Basic and acidic residues" evidence="7">
    <location>
        <begin position="4809"/>
        <end position="4821"/>
    </location>
</feature>
<feature type="compositionally biased region" description="Basic and acidic residues" evidence="7">
    <location>
        <begin position="4971"/>
        <end position="4981"/>
    </location>
</feature>
<feature type="modified residue" description="Phosphoserine" evidence="2">
    <location>
        <position position="4876"/>
    </location>
</feature>
<feature type="glycosylation site" description="N-linked (GlcNAc...) asparagine" evidence="3">
    <location>
        <position position="84"/>
    </location>
</feature>
<feature type="glycosylation site" description="N-linked (GlcNAc...) asparagine" evidence="3">
    <location>
        <position position="237"/>
    </location>
</feature>
<feature type="glycosylation site" description="N-linked (GlcNAc...) asparagine" evidence="3">
    <location>
        <position position="393"/>
    </location>
</feature>
<feature type="glycosylation site" description="N-linked (GlcNAc...) asparagine" evidence="3">
    <location>
        <position position="416"/>
    </location>
</feature>
<feature type="glycosylation site" description="N-linked (GlcNAc...) asparagine" evidence="3">
    <location>
        <position position="435"/>
    </location>
</feature>
<feature type="glycosylation site" description="N-linked (GlcNAc...) asparagine" evidence="3">
    <location>
        <position position="483"/>
    </location>
</feature>
<feature type="glycosylation site" description="N-linked (GlcNAc...) asparagine" evidence="3">
    <location>
        <position position="551"/>
    </location>
</feature>
<feature type="glycosylation site" description="N-linked (GlcNAc...) asparagine" evidence="3">
    <location>
        <position position="615"/>
    </location>
</feature>
<feature type="glycosylation site" description="N-linked (GlcNAc...) asparagine" evidence="3">
    <location>
        <position position="676"/>
    </location>
</feature>
<feature type="glycosylation site" description="N-linked (GlcNAc...) asparagine" evidence="3">
    <location>
        <position position="721"/>
    </location>
</feature>
<feature type="glycosylation site" description="N-linked (GlcNAc...) asparagine" evidence="3">
    <location>
        <position position="825"/>
    </location>
</feature>
<feature type="glycosylation site" description="N-linked (GlcNAc...) asparagine" evidence="3">
    <location>
        <position position="880"/>
    </location>
</feature>
<feature type="glycosylation site" description="N-linked (GlcNAc...) asparagine" evidence="3">
    <location>
        <position position="946"/>
    </location>
</feature>
<feature type="glycosylation site" description="N-linked (GlcNAc...) asparagine" evidence="3">
    <location>
        <position position="1085"/>
    </location>
</feature>
<feature type="glycosylation site" description="N-linked (GlcNAc...) asparagine" evidence="3">
    <location>
        <position position="1101"/>
    </location>
</feature>
<feature type="glycosylation site" description="N-linked (GlcNAc...) asparagine" evidence="3">
    <location>
        <position position="1104"/>
    </location>
</feature>
<feature type="glycosylation site" description="N-linked (GlcNAc...) asparagine" evidence="3">
    <location>
        <position position="1225"/>
    </location>
</feature>
<feature type="glycosylation site" description="N-linked (GlcNAc...) asparagine" evidence="3">
    <location>
        <position position="1296"/>
    </location>
</feature>
<feature type="glycosylation site" description="N-linked (GlcNAc...) asparagine" evidence="3">
    <location>
        <position position="1389"/>
    </location>
</feature>
<feature type="glycosylation site" description="N-linked (GlcNAc...) asparagine" evidence="3">
    <location>
        <position position="1514"/>
    </location>
</feature>
<feature type="glycosylation site" description="N-linked (GlcNAc...) asparagine" evidence="3">
    <location>
        <position position="1828"/>
    </location>
</feature>
<feature type="glycosylation site" description="N-linked (GlcNAc...) asparagine" evidence="3">
    <location>
        <position position="1899"/>
    </location>
</feature>
<feature type="glycosylation site" description="N-linked (GlcNAc...) asparagine" evidence="3">
    <location>
        <position position="1967"/>
    </location>
</feature>
<feature type="glycosylation site" description="N-linked (GlcNAc...) asparagine" evidence="3">
    <location>
        <position position="2119"/>
    </location>
</feature>
<feature type="glycosylation site" description="N-linked (GlcNAc...) asparagine" evidence="3">
    <location>
        <position position="2387"/>
    </location>
</feature>
<feature type="glycosylation site" description="N-linked (GlcNAc...) asparagine" evidence="3">
    <location>
        <position position="2430"/>
    </location>
</feature>
<feature type="glycosylation site" description="N-linked (GlcNAc...) asparagine" evidence="3">
    <location>
        <position position="2921"/>
    </location>
</feature>
<feature type="glycosylation site" description="N-linked (GlcNAc...) asparagine" evidence="3">
    <location>
        <position position="2937"/>
    </location>
</feature>
<feature type="glycosylation site" description="N-linked (GlcNAc...) asparagine" evidence="3">
    <location>
        <position position="3036"/>
    </location>
</feature>
<feature type="glycosylation site" description="N-linked (GlcNAc...) asparagine" evidence="3">
    <location>
        <position position="3140"/>
    </location>
</feature>
<feature type="glycosylation site" description="N-linked (GlcNAc...) asparagine" evidence="3">
    <location>
        <position position="3217"/>
    </location>
</feature>
<feature type="glycosylation site" description="N-linked (GlcNAc...) asparagine" evidence="3">
    <location>
        <position position="3392"/>
    </location>
</feature>
<feature type="glycosylation site" description="N-linked (GlcNAc...) asparagine" evidence="3">
    <location>
        <position position="3477"/>
    </location>
</feature>
<feature type="glycosylation site" description="N-linked (GlcNAc...) asparagine" evidence="3">
    <location>
        <position position="3706"/>
    </location>
</feature>
<feature type="glycosylation site" description="N-linked (GlcNAc...) asparagine" evidence="3">
    <location>
        <position position="3758"/>
    </location>
</feature>
<feature type="glycosylation site" description="N-linked (GlcNAc...) asparagine" evidence="3">
    <location>
        <position position="4017"/>
    </location>
</feature>
<feature type="glycosylation site" description="N-linked (GlcNAc...) asparagine" evidence="3">
    <location>
        <position position="4267"/>
    </location>
</feature>
<feature type="glycosylation site" description="N-linked (GlcNAc...) asparagine" evidence="3">
    <location>
        <position position="4312"/>
    </location>
</feature>
<feature type="disulfide bond" evidence="1">
    <location>
        <begin position="3806"/>
        <end position="3817"/>
    </location>
</feature>
<feature type="disulfide bond" evidence="1">
    <location>
        <begin position="3811"/>
        <end position="3848"/>
    </location>
</feature>
<feature type="disulfide bond" evidence="1">
    <location>
        <begin position="3850"/>
        <end position="3859"/>
    </location>
</feature>
<feature type="disulfide bond" evidence="1">
    <location>
        <begin position="3866"/>
        <end position="3877"/>
    </location>
</feature>
<feature type="disulfide bond" evidence="1">
    <location>
        <begin position="3871"/>
        <end position="3886"/>
    </location>
</feature>
<feature type="disulfide bond" evidence="1">
    <location>
        <begin position="3888"/>
        <end position="3897"/>
    </location>
</feature>
<feature type="disulfide bond" evidence="1">
    <location>
        <begin position="3904"/>
        <end position="3915"/>
    </location>
</feature>
<feature type="disulfide bond" evidence="1">
    <location>
        <begin position="3909"/>
        <end position="3924"/>
    </location>
</feature>
<feature type="disulfide bond" evidence="1">
    <location>
        <begin position="3926"/>
        <end position="3935"/>
    </location>
</feature>
<feature type="disulfide bond" evidence="1">
    <location>
        <begin position="3942"/>
        <end position="3953"/>
    </location>
</feature>
<feature type="disulfide bond" evidence="1">
    <location>
        <begin position="3947"/>
        <end position="3962"/>
    </location>
</feature>
<feature type="disulfide bond" evidence="1">
    <location>
        <begin position="3964"/>
        <end position="3973"/>
    </location>
</feature>
<feature type="disulfide bond" evidence="1">
    <location>
        <begin position="4133"/>
        <end position="4159"/>
    </location>
</feature>
<feature type="disulfide bond" evidence="1">
    <location>
        <begin position="4166"/>
        <end position="4177"/>
    </location>
</feature>
<feature type="disulfide bond" evidence="1">
    <location>
        <begin position="4171"/>
        <end position="4186"/>
    </location>
</feature>
<feature type="disulfide bond" evidence="1">
    <location>
        <begin position="4188"/>
        <end position="4197"/>
    </location>
</feature>
<feature type="disulfide bond" evidence="1">
    <location>
        <begin position="4365"/>
        <end position="4398"/>
    </location>
</feature>
<feature type="disulfide bond" evidence="1">
    <location>
        <begin position="4430"/>
        <end position="4441"/>
    </location>
</feature>
<feature type="disulfide bond" evidence="1">
    <location>
        <begin position="4435"/>
        <end position="4451"/>
    </location>
</feature>
<feature type="disulfide bond" evidence="1">
    <location>
        <begin position="4453"/>
        <end position="4462"/>
    </location>
</feature>
<feature type="splice variant" id="VSP_032334" description="In isoform 2." evidence="14">
    <location>
        <begin position="1"/>
        <end position="1702"/>
    </location>
</feature>
<feature type="splice variant" id="VSP_032335" description="In isoform 2." evidence="14">
    <original>CLYLVDVYAIEKSTAFPRTQRAE</original>
    <variation>MVTTVVAVGDTLAQPLAAAEVFI</variation>
    <location>
        <begin position="1703"/>
        <end position="1725"/>
    </location>
</feature>
<feature type="splice variant" id="VSP_032336" description="In isoform 2." evidence="14">
    <location>
        <begin position="3932"/>
        <end position="3966"/>
    </location>
</feature>
<feature type="splice variant" id="VSP_032337" description="In isoform 2." evidence="14">
    <original>CPRLEGACTRSPCQHGGTCMDYWSWQQCHCKEGLTGKYCEKS</original>
    <variation>YGDFISYCFKEKKCKKVCFT</variation>
    <location>
        <begin position="4159"/>
        <end position="4200"/>
    </location>
</feature>
<feature type="splice variant" id="VSP_032338" description="In isoform 3." evidence="13">
    <location>
        <position position="4360"/>
    </location>
</feature>
<feature type="sequence variant" id="VAR_048580" description="In dbSNP:rs6847454.">
    <original>Q</original>
    <variation>L</variation>
    <location>
        <position position="453"/>
    </location>
</feature>
<feature type="sequence variant" id="VAR_071948" description="In HKLLS2." evidence="12">
    <original>F</original>
    <variation>L</variation>
    <location>
        <position position="475"/>
    </location>
</feature>
<feature type="sequence variant" id="VAR_071949" description="In HKLLS2." evidence="12">
    <original>E</original>
    <variation>Q</variation>
    <location>
        <position position="486"/>
    </location>
</feature>
<feature type="sequence variant" id="VAR_048581" description="In dbSNP:rs1039808.">
    <original>A</original>
    <variation>V</variation>
    <location>
        <position position="807"/>
    </location>
</feature>
<feature type="sequence variant" id="VAR_070925" description="In VMLDS2 and HKLLS2; dbSNP:rs398122955." evidence="11 12">
    <original>E</original>
    <variation>K</variation>
    <location>
        <position position="2375"/>
    </location>
</feature>
<feature type="sequence variant" id="VAR_039860" description="In dbSNP:rs1485569217.">
    <original>D</original>
    <variation>N</variation>
    <location>
        <position position="2826"/>
    </location>
</feature>
<feature type="sequence variant" id="VAR_039861" description="In dbSNP:rs1567047.">
    <original>G</original>
    <variation>D</variation>
    <location>
        <position position="3524"/>
    </location>
</feature>
<feature type="sequence variant" id="VAR_039862" description="In dbSNP:rs17009684.">
    <original>K</original>
    <variation>E</variation>
    <location>
        <position position="3828"/>
    </location>
</feature>
<feature type="sequence variant" id="VAR_039863" description="In dbSNP:rs12650153." evidence="8">
    <original>S</original>
    <variation>N</variation>
    <location>
        <position position="3873"/>
    </location>
</feature>
<feature type="sequence variant" id="VAR_070926" description="In VMLDS2; dbSNP:rs398122953." evidence="11">
    <original>C</original>
    <variation>F</variation>
    <location>
        <position position="4159"/>
    </location>
</feature>
<feature type="sequence variant" id="VAR_071950" description="In HKLLS2; dbSNP:rs199682210." evidence="12">
    <original>S</original>
    <variation>F</variation>
    <location>
        <position position="4282"/>
    </location>
</feature>
<feature type="sequence variant" id="VAR_039864" description="In dbSNP:rs11942361.">
    <original>E</original>
    <variation>K</variation>
    <location>
        <position position="4374"/>
    </location>
</feature>
<feature type="sequence variant" id="VAR_070927" description="In VMLDS2; dbSNP:rs398122954." evidence="11">
    <original>C</original>
    <variation>Y</variation>
    <location>
        <position position="4398"/>
    </location>
</feature>
<feature type="sequence variant" id="VAR_039865" description="In dbSNP:rs1014867." evidence="8">
    <original>P</original>
    <variation>S</variation>
    <location>
        <position position="4972"/>
    </location>
</feature>
<feature type="sequence variant" id="VAR_039866" description="In dbSNP:rs17009858.">
    <original>A</original>
    <variation>T</variation>
    <location>
        <position position="4977"/>
    </location>
</feature>
<feature type="sequence conflict" description="In Ref. 3; BAE45762." evidence="15" ref="3">
    <original>RE</original>
    <variation>QK</variation>
    <location>
        <begin position="3363"/>
        <end position="3364"/>
    </location>
</feature>
<feature type="sequence conflict" description="In Ref. 4; BAB15534." evidence="15" ref="4">
    <original>P</original>
    <variation>S</variation>
    <location>
        <position position="4868"/>
    </location>
</feature>
<feature type="strand" evidence="16">
    <location>
        <begin position="46"/>
        <end position="54"/>
    </location>
</feature>
<feature type="strand" evidence="16">
    <location>
        <begin position="60"/>
        <end position="63"/>
    </location>
</feature>
<feature type="strand" evidence="16">
    <location>
        <begin position="72"/>
        <end position="76"/>
    </location>
</feature>
<feature type="strand" evidence="16">
    <location>
        <begin position="79"/>
        <end position="83"/>
    </location>
</feature>
<feature type="turn" evidence="16">
    <location>
        <begin position="85"/>
        <end position="87"/>
    </location>
</feature>
<feature type="strand" evidence="16">
    <location>
        <begin position="89"/>
        <end position="94"/>
    </location>
</feature>
<feature type="helix" evidence="16">
    <location>
        <begin position="98"/>
        <end position="100"/>
    </location>
</feature>
<feature type="strand" evidence="16">
    <location>
        <begin position="104"/>
        <end position="115"/>
    </location>
</feature>
<feature type="strand" evidence="16">
    <location>
        <begin position="118"/>
        <end position="126"/>
    </location>
</feature>
<feature type="strand" evidence="16">
    <location>
        <begin position="136"/>
        <end position="145"/>
    </location>
</feature>
<feature type="strand" evidence="16">
    <location>
        <begin position="153"/>
        <end position="155"/>
    </location>
</feature>
<feature type="helix" evidence="16">
    <location>
        <begin position="165"/>
        <end position="167"/>
    </location>
</feature>
<feature type="strand" evidence="16">
    <location>
        <begin position="175"/>
        <end position="179"/>
    </location>
</feature>
<feature type="strand" evidence="16">
    <location>
        <begin position="185"/>
        <end position="191"/>
    </location>
</feature>
<feature type="strand" evidence="16">
    <location>
        <begin position="198"/>
        <end position="204"/>
    </location>
</feature>
<feature type="turn" evidence="16">
    <location>
        <begin position="210"/>
        <end position="212"/>
    </location>
</feature>
<feature type="strand" evidence="16">
    <location>
        <begin position="215"/>
        <end position="224"/>
    </location>
</feature>
<feature type="strand" evidence="16">
    <location>
        <begin position="226"/>
        <end position="228"/>
    </location>
</feature>
<feature type="strand" evidence="16">
    <location>
        <begin position="231"/>
        <end position="241"/>
    </location>
</feature>
<feature type="strand" evidence="16">
    <location>
        <begin position="249"/>
        <end position="251"/>
    </location>
</feature>
<feature type="strand" evidence="16">
    <location>
        <begin position="253"/>
        <end position="260"/>
    </location>
</feature>
<feature type="strand" evidence="16">
    <location>
        <begin position="268"/>
        <end position="271"/>
    </location>
</feature>
<feature type="helix" evidence="16">
    <location>
        <begin position="280"/>
        <end position="283"/>
    </location>
</feature>
<feature type="strand" evidence="16">
    <location>
        <begin position="285"/>
        <end position="290"/>
    </location>
</feature>
<feature type="strand" evidence="16">
    <location>
        <begin position="294"/>
        <end position="298"/>
    </location>
</feature>
<feature type="turn" evidence="16">
    <location>
        <begin position="300"/>
        <end position="302"/>
    </location>
</feature>
<feature type="strand" evidence="16">
    <location>
        <begin position="304"/>
        <end position="307"/>
    </location>
</feature>
<feature type="turn" evidence="16">
    <location>
        <begin position="313"/>
        <end position="315"/>
    </location>
</feature>
<feature type="strand" evidence="16">
    <location>
        <begin position="318"/>
        <end position="327"/>
    </location>
</feature>
<feature type="strand" evidence="16">
    <location>
        <begin position="329"/>
        <end position="331"/>
    </location>
</feature>
<feature type="strand" evidence="16">
    <location>
        <begin position="334"/>
        <end position="344"/>
    </location>
</feature>
<feature type="strand" evidence="16">
    <location>
        <begin position="352"/>
        <end position="356"/>
    </location>
</feature>
<feature type="strand" evidence="16">
    <location>
        <begin position="362"/>
        <end position="368"/>
    </location>
</feature>
<feature type="strand" evidence="16">
    <location>
        <begin position="376"/>
        <end position="383"/>
    </location>
</feature>
<feature type="helix" evidence="16">
    <location>
        <begin position="388"/>
        <end position="391"/>
    </location>
</feature>
<feature type="strand" evidence="16">
    <location>
        <begin position="395"/>
        <end position="398"/>
    </location>
</feature>
<feature type="strand" evidence="16">
    <location>
        <begin position="407"/>
        <end position="411"/>
    </location>
</feature>
<feature type="strand" evidence="16">
    <location>
        <begin position="417"/>
        <end position="422"/>
    </location>
</feature>
<feature type="turn" evidence="16">
    <location>
        <begin position="428"/>
        <end position="430"/>
    </location>
</feature>
<feature type="strand" evidence="16">
    <location>
        <begin position="432"/>
        <end position="443"/>
    </location>
</feature>
<feature type="strand" evidence="16">
    <location>
        <begin position="456"/>
        <end position="466"/>
    </location>
</feature>
<organism>
    <name type="scientific">Homo sapiens</name>
    <name type="common">Human</name>
    <dbReference type="NCBI Taxonomy" id="9606"/>
    <lineage>
        <taxon>Eukaryota</taxon>
        <taxon>Metazoa</taxon>
        <taxon>Chordata</taxon>
        <taxon>Craniata</taxon>
        <taxon>Vertebrata</taxon>
        <taxon>Euteleostomi</taxon>
        <taxon>Mammalia</taxon>
        <taxon>Eutheria</taxon>
        <taxon>Euarchontoglires</taxon>
        <taxon>Primates</taxon>
        <taxon>Haplorrhini</taxon>
        <taxon>Catarrhini</taxon>
        <taxon>Hominidae</taxon>
        <taxon>Homo</taxon>
    </lineage>
</organism>
<dbReference type="EMBL" id="AY356402">
    <property type="protein sequence ID" value="AAR13653.1"/>
    <property type="molecule type" value="mRNA"/>
</dbReference>
<dbReference type="EMBL" id="AC079835">
    <property type="status" value="NOT_ANNOTATED_CDS"/>
    <property type="molecule type" value="Genomic_DNA"/>
</dbReference>
<dbReference type="EMBL" id="AC092629">
    <property type="status" value="NOT_ANNOTATED_CDS"/>
    <property type="molecule type" value="Genomic_DNA"/>
</dbReference>
<dbReference type="EMBL" id="AC098865">
    <property type="status" value="NOT_ANNOTATED_CDS"/>
    <property type="molecule type" value="Genomic_DNA"/>
</dbReference>
<dbReference type="EMBL" id="AB075518">
    <property type="protein sequence ID" value="BAE45762.1"/>
    <property type="molecule type" value="mRNA"/>
</dbReference>
<dbReference type="EMBL" id="AK026709">
    <property type="protein sequence ID" value="BAB15534.1"/>
    <property type="status" value="ALT_SEQ"/>
    <property type="molecule type" value="mRNA"/>
</dbReference>
<dbReference type="EMBL" id="AK291461">
    <property type="protein sequence ID" value="BAF84150.1"/>
    <property type="status" value="ALT_INIT"/>
    <property type="molecule type" value="mRNA"/>
</dbReference>
<dbReference type="EMBL" id="AL713715">
    <property type="protein sequence ID" value="CAD28510.1"/>
    <property type="molecule type" value="mRNA"/>
</dbReference>
<dbReference type="RefSeq" id="NP_001278214.1">
    <property type="nucleotide sequence ID" value="NM_001291285.1"/>
</dbReference>
<dbReference type="RefSeq" id="NP_001278232.1">
    <property type="nucleotide sequence ID" value="NM_001291303.1"/>
</dbReference>
<dbReference type="RefSeq" id="NP_078858.4">
    <molecule id="Q6V0I7-1"/>
    <property type="nucleotide sequence ID" value="NM_024582.4"/>
</dbReference>
<dbReference type="PDB" id="8EGW">
    <property type="method" value="X-ray"/>
    <property type="resolution" value="2.30 A"/>
    <property type="chains" value="B=1-467"/>
</dbReference>
<dbReference type="PDB" id="8EGX">
    <property type="method" value="X-ray"/>
    <property type="resolution" value="3.69 A"/>
    <property type="chains" value="B=1-467"/>
</dbReference>
<dbReference type="PDBsum" id="8EGW"/>
<dbReference type="PDBsum" id="8EGX"/>
<dbReference type="SMR" id="Q6V0I7"/>
<dbReference type="BioGRID" id="122763">
    <property type="interactions" value="77"/>
</dbReference>
<dbReference type="ELM" id="Q6V0I7"/>
<dbReference type="FunCoup" id="Q6V0I7">
    <property type="interactions" value="566"/>
</dbReference>
<dbReference type="IntAct" id="Q6V0I7">
    <property type="interactions" value="54"/>
</dbReference>
<dbReference type="MINT" id="Q6V0I7"/>
<dbReference type="STRING" id="9606.ENSP00000377862"/>
<dbReference type="CarbonylDB" id="Q6V0I7"/>
<dbReference type="GlyCosmos" id="Q6V0I7">
    <property type="glycosylation" value="38 sites, No reported glycans"/>
</dbReference>
<dbReference type="GlyGen" id="Q6V0I7">
    <property type="glycosylation" value="45 sites, 11 N-linked glycans (14 sites), 1 O-linked glycan (5 sites)"/>
</dbReference>
<dbReference type="iPTMnet" id="Q6V0I7"/>
<dbReference type="PhosphoSitePlus" id="Q6V0I7"/>
<dbReference type="SwissPalm" id="Q6V0I7"/>
<dbReference type="BioMuta" id="FAT4"/>
<dbReference type="DMDM" id="172046149"/>
<dbReference type="jPOST" id="Q6V0I7"/>
<dbReference type="MassIVE" id="Q6V0I7"/>
<dbReference type="PaxDb" id="9606-ENSP00000377862"/>
<dbReference type="PeptideAtlas" id="Q6V0I7"/>
<dbReference type="ProteomicsDB" id="67701">
    <molecule id="Q6V0I7-1"/>
</dbReference>
<dbReference type="ProteomicsDB" id="67702">
    <molecule id="Q6V0I7-2"/>
</dbReference>
<dbReference type="ProteomicsDB" id="67703">
    <molecule id="Q6V0I7-3"/>
</dbReference>
<dbReference type="Pumba" id="Q6V0I7"/>
<dbReference type="Antibodypedia" id="62649">
    <property type="antibodies" value="114 antibodies from 18 providers"/>
</dbReference>
<dbReference type="DNASU" id="79633"/>
<dbReference type="Ensembl" id="ENST00000335110.5">
    <molecule id="Q6V0I7-2"/>
    <property type="protein sequence ID" value="ENSP00000335169.5"/>
    <property type="gene ID" value="ENSG00000196159.14"/>
</dbReference>
<dbReference type="GeneID" id="79633"/>
<dbReference type="KEGG" id="hsa:79633"/>
<dbReference type="UCSC" id="uc003ifj.5">
    <molecule id="Q6V0I7-1"/>
    <property type="organism name" value="human"/>
</dbReference>
<dbReference type="AGR" id="HGNC:23109"/>
<dbReference type="CTD" id="79633"/>
<dbReference type="DisGeNET" id="79633"/>
<dbReference type="GeneCards" id="FAT4"/>
<dbReference type="HGNC" id="HGNC:23109">
    <property type="gene designation" value="FAT4"/>
</dbReference>
<dbReference type="HPA" id="ENSG00000196159">
    <property type="expression patterns" value="Low tissue specificity"/>
</dbReference>
<dbReference type="MalaCards" id="FAT4"/>
<dbReference type="MIM" id="612411">
    <property type="type" value="gene"/>
</dbReference>
<dbReference type="MIM" id="615546">
    <property type="type" value="phenotype"/>
</dbReference>
<dbReference type="MIM" id="616006">
    <property type="type" value="phenotype"/>
</dbReference>
<dbReference type="neXtProt" id="NX_Q6V0I7"/>
<dbReference type="OpenTargets" id="ENSG00000196159"/>
<dbReference type="Orphanet" id="314679">
    <property type="disease" value="Cerebrofacioarticular syndrome"/>
</dbReference>
<dbReference type="Orphanet" id="2136">
    <property type="disease" value="Hennekam syndrome"/>
</dbReference>
<dbReference type="PharmGKB" id="PA134954366"/>
<dbReference type="VEuPathDB" id="HostDB:ENSG00000196159"/>
<dbReference type="eggNOG" id="KOG1217">
    <property type="taxonomic scope" value="Eukaryota"/>
</dbReference>
<dbReference type="eggNOG" id="KOG3594">
    <property type="taxonomic scope" value="Eukaryota"/>
</dbReference>
<dbReference type="GeneTree" id="ENSGT00940000155719"/>
<dbReference type="HOGENOM" id="CLU_000042_1_0_1"/>
<dbReference type="InParanoid" id="Q6V0I7"/>
<dbReference type="OrthoDB" id="6252479at2759"/>
<dbReference type="PAN-GO" id="Q6V0I7">
    <property type="GO annotations" value="1 GO annotation based on evolutionary models"/>
</dbReference>
<dbReference type="PhylomeDB" id="Q6V0I7"/>
<dbReference type="TreeFam" id="TF331335"/>
<dbReference type="PathwayCommons" id="Q6V0I7"/>
<dbReference type="SignaLink" id="Q6V0I7"/>
<dbReference type="BioGRID-ORCS" id="79633">
    <property type="hits" value="12 hits in 1146 CRISPR screens"/>
</dbReference>
<dbReference type="ChiTaRS" id="FAT4">
    <property type="organism name" value="human"/>
</dbReference>
<dbReference type="GeneWiki" id="FAT4"/>
<dbReference type="GenomeRNAi" id="79633"/>
<dbReference type="Pharos" id="Q6V0I7">
    <property type="development level" value="Tbio"/>
</dbReference>
<dbReference type="PRO" id="PR:Q6V0I7"/>
<dbReference type="Proteomes" id="UP000005640">
    <property type="component" value="Chromosome 4"/>
</dbReference>
<dbReference type="RNAct" id="Q6V0I7">
    <property type="molecule type" value="protein"/>
</dbReference>
<dbReference type="Bgee" id="ENSG00000196159">
    <property type="expression patterns" value="Expressed in calcaneal tendon and 162 other cell types or tissues"/>
</dbReference>
<dbReference type="ExpressionAtlas" id="Q6V0I7">
    <property type="expression patterns" value="baseline and differential"/>
</dbReference>
<dbReference type="GO" id="GO:0070062">
    <property type="term" value="C:extracellular exosome"/>
    <property type="evidence" value="ECO:0007005"/>
    <property type="project" value="UniProtKB"/>
</dbReference>
<dbReference type="GO" id="GO:0005886">
    <property type="term" value="C:plasma membrane"/>
    <property type="evidence" value="ECO:0007669"/>
    <property type="project" value="InterPro"/>
</dbReference>
<dbReference type="GO" id="GO:0005509">
    <property type="term" value="F:calcium ion binding"/>
    <property type="evidence" value="ECO:0007669"/>
    <property type="project" value="InterPro"/>
</dbReference>
<dbReference type="GO" id="GO:0098609">
    <property type="term" value="P:cell-cell adhesion"/>
    <property type="evidence" value="ECO:0000318"/>
    <property type="project" value="GO_Central"/>
</dbReference>
<dbReference type="GO" id="GO:0021987">
    <property type="term" value="P:cerebral cortex development"/>
    <property type="evidence" value="ECO:0000250"/>
    <property type="project" value="UniProtKB"/>
</dbReference>
<dbReference type="GO" id="GO:0007157">
    <property type="term" value="P:heterophilic cell-cell adhesion via plasma membrane cell adhesion molecules"/>
    <property type="evidence" value="ECO:0000250"/>
    <property type="project" value="UniProtKB"/>
</dbReference>
<dbReference type="GO" id="GO:0035329">
    <property type="term" value="P:hippo signaling"/>
    <property type="evidence" value="ECO:0000250"/>
    <property type="project" value="UniProtKB"/>
</dbReference>
<dbReference type="GO" id="GO:0007156">
    <property type="term" value="P:homophilic cell adhesion via plasma membrane adhesion molecules"/>
    <property type="evidence" value="ECO:0007669"/>
    <property type="project" value="InterPro"/>
</dbReference>
<dbReference type="GO" id="GO:0022008">
    <property type="term" value="P:neurogenesis"/>
    <property type="evidence" value="ECO:0000250"/>
    <property type="project" value="UniProtKB"/>
</dbReference>
<dbReference type="CDD" id="cd11304">
    <property type="entry name" value="Cadherin_repeat"/>
    <property type="match status" value="34"/>
</dbReference>
<dbReference type="CDD" id="cd00054">
    <property type="entry name" value="EGF_CA"/>
    <property type="match status" value="5"/>
</dbReference>
<dbReference type="CDD" id="cd00110">
    <property type="entry name" value="LamG"/>
    <property type="match status" value="2"/>
</dbReference>
<dbReference type="FunFam" id="2.60.40.60:FF:000010">
    <property type="entry name" value="Cadherin EGF LAG seven-pass G-type receptor 3"/>
    <property type="match status" value="6"/>
</dbReference>
<dbReference type="FunFam" id="2.60.40.60:FF:000029">
    <property type="entry name" value="Cadherin EGF LAG seven-pass G-type receptor 3"/>
    <property type="match status" value="1"/>
</dbReference>
<dbReference type="FunFam" id="2.60.40.60:FF:000135">
    <property type="entry name" value="cadherin-23 isoform X1"/>
    <property type="match status" value="1"/>
</dbReference>
<dbReference type="FunFam" id="2.60.40.60:FF:000024">
    <property type="entry name" value="FAT atypical cadherin 3"/>
    <property type="match status" value="4"/>
</dbReference>
<dbReference type="FunFam" id="2.10.25.10:FF:000066">
    <property type="entry name" value="FAT atypical cadherin 4"/>
    <property type="match status" value="1"/>
</dbReference>
<dbReference type="FunFam" id="2.10.25.10:FF:000151">
    <property type="entry name" value="FAT atypical cadherin 4"/>
    <property type="match status" value="1"/>
</dbReference>
<dbReference type="FunFam" id="2.10.25.10:FF:000168">
    <property type="entry name" value="FAT atypical cadherin 4"/>
    <property type="match status" value="1"/>
</dbReference>
<dbReference type="FunFam" id="2.10.25.10:FF:000293">
    <property type="entry name" value="FAT atypical cadherin 4"/>
    <property type="match status" value="1"/>
</dbReference>
<dbReference type="FunFam" id="2.10.25.10:FF:000344">
    <property type="entry name" value="FAT atypical cadherin 4"/>
    <property type="match status" value="1"/>
</dbReference>
<dbReference type="FunFam" id="2.60.120.200:FF:000030">
    <property type="entry name" value="FAT atypical cadherin 4"/>
    <property type="match status" value="1"/>
</dbReference>
<dbReference type="FunFam" id="2.60.120.200:FF:000083">
    <property type="entry name" value="FAT atypical cadherin 4"/>
    <property type="match status" value="1"/>
</dbReference>
<dbReference type="FunFam" id="2.60.40.60:FF:000101">
    <property type="entry name" value="FAT atypical cadherin 4"/>
    <property type="match status" value="1"/>
</dbReference>
<dbReference type="FunFam" id="2.60.40.60:FF:000106">
    <property type="entry name" value="FAT atypical cadherin 4"/>
    <property type="match status" value="1"/>
</dbReference>
<dbReference type="FunFam" id="2.60.40.60:FF:000108">
    <property type="entry name" value="FAT atypical cadherin 4"/>
    <property type="match status" value="1"/>
</dbReference>
<dbReference type="FunFam" id="2.60.40.60:FF:000110">
    <property type="entry name" value="FAT atypical cadherin 4"/>
    <property type="match status" value="1"/>
</dbReference>
<dbReference type="FunFam" id="2.60.40.60:FF:000114">
    <property type="entry name" value="FAT atypical cadherin 4"/>
    <property type="match status" value="2"/>
</dbReference>
<dbReference type="FunFam" id="2.60.40.60:FF:000115">
    <property type="entry name" value="FAT atypical cadherin 4"/>
    <property type="match status" value="1"/>
</dbReference>
<dbReference type="FunFam" id="2.60.40.60:FF:000131">
    <property type="entry name" value="FAT atypical cadherin 4"/>
    <property type="match status" value="1"/>
</dbReference>
<dbReference type="FunFam" id="2.60.40.60:FF:000137">
    <property type="entry name" value="FAT atypical cadherin 4"/>
    <property type="match status" value="1"/>
</dbReference>
<dbReference type="FunFam" id="2.60.40.60:FF:000138">
    <property type="entry name" value="FAT atypical cadherin 4"/>
    <property type="match status" value="1"/>
</dbReference>
<dbReference type="FunFam" id="2.60.40.60:FF:000143">
    <property type="entry name" value="FAT atypical cadherin 4"/>
    <property type="match status" value="1"/>
</dbReference>
<dbReference type="FunFam" id="2.60.40.60:FF:000144">
    <property type="entry name" value="FAT atypical cadherin 4"/>
    <property type="match status" value="1"/>
</dbReference>
<dbReference type="FunFam" id="2.60.40.60:FF:000154">
    <property type="entry name" value="FAT atypical cadherin 4"/>
    <property type="match status" value="1"/>
</dbReference>
<dbReference type="FunFam" id="2.60.40.60:FF:000170">
    <property type="entry name" value="FAT atypical cadherin 4"/>
    <property type="match status" value="1"/>
</dbReference>
<dbReference type="FunFam" id="2.60.40.60:FF:000171">
    <property type="entry name" value="FAT atypical cadherin 4"/>
    <property type="match status" value="1"/>
</dbReference>
<dbReference type="FunFam" id="2.60.40.60:FF:000174">
    <property type="entry name" value="FAT atypical cadherin 4"/>
    <property type="match status" value="1"/>
</dbReference>
<dbReference type="FunFam" id="2.60.40.60:FF:000176">
    <property type="entry name" value="FAT atypical cadherin 4"/>
    <property type="match status" value="1"/>
</dbReference>
<dbReference type="FunFam" id="2.60.40.60:FF:000180">
    <property type="entry name" value="FAT atypical cadherin 4"/>
    <property type="match status" value="1"/>
</dbReference>
<dbReference type="FunFam" id="2.60.40.60:FF:000189">
    <property type="entry name" value="FAT atypical cadherin 4"/>
    <property type="match status" value="1"/>
</dbReference>
<dbReference type="FunFam" id="2.60.40.60:FF:000081">
    <property type="entry name" value="protocadherin Fat 4"/>
    <property type="match status" value="1"/>
</dbReference>
<dbReference type="FunFam" id="2.60.40.60:FF:000118">
    <property type="entry name" value="protocadherin Fat 4"/>
    <property type="match status" value="1"/>
</dbReference>
<dbReference type="FunFam" id="2.60.40.60:FF:000134">
    <property type="entry name" value="protocadherin Fat 4"/>
    <property type="match status" value="1"/>
</dbReference>
<dbReference type="FunFam" id="2.10.25.10:FF:000335">
    <property type="entry name" value="protocadherin Fat 4 isoform X2"/>
    <property type="match status" value="1"/>
</dbReference>
<dbReference type="Gene3D" id="2.60.120.200">
    <property type="match status" value="2"/>
</dbReference>
<dbReference type="Gene3D" id="2.60.40.60">
    <property type="entry name" value="Cadherins"/>
    <property type="match status" value="34"/>
</dbReference>
<dbReference type="Gene3D" id="2.10.25.10">
    <property type="entry name" value="Laminin"/>
    <property type="match status" value="6"/>
</dbReference>
<dbReference type="InterPro" id="IPR039808">
    <property type="entry name" value="Cadherin"/>
</dbReference>
<dbReference type="InterPro" id="IPR002126">
    <property type="entry name" value="Cadherin-like_dom"/>
</dbReference>
<dbReference type="InterPro" id="IPR015919">
    <property type="entry name" value="Cadherin-like_sf"/>
</dbReference>
<dbReference type="InterPro" id="IPR020894">
    <property type="entry name" value="Cadherin_CS"/>
</dbReference>
<dbReference type="InterPro" id="IPR013320">
    <property type="entry name" value="ConA-like_dom_sf"/>
</dbReference>
<dbReference type="InterPro" id="IPR001881">
    <property type="entry name" value="EGF-like_Ca-bd_dom"/>
</dbReference>
<dbReference type="InterPro" id="IPR013032">
    <property type="entry name" value="EGF-like_CS"/>
</dbReference>
<dbReference type="InterPro" id="IPR000742">
    <property type="entry name" value="EGF-like_dom"/>
</dbReference>
<dbReference type="InterPro" id="IPR000152">
    <property type="entry name" value="EGF-type_Asp/Asn_hydroxyl_site"/>
</dbReference>
<dbReference type="InterPro" id="IPR018097">
    <property type="entry name" value="EGF_Ca-bd_CS"/>
</dbReference>
<dbReference type="InterPro" id="IPR009030">
    <property type="entry name" value="Growth_fac_rcpt_cys_sf"/>
</dbReference>
<dbReference type="InterPro" id="IPR001791">
    <property type="entry name" value="Laminin_G"/>
</dbReference>
<dbReference type="InterPro" id="IPR049883">
    <property type="entry name" value="NOTCH1_EGF-like"/>
</dbReference>
<dbReference type="PANTHER" id="PTHR24027:SF438">
    <property type="entry name" value="CADHERIN 23"/>
    <property type="match status" value="1"/>
</dbReference>
<dbReference type="PANTHER" id="PTHR24027">
    <property type="entry name" value="CADHERIN-23"/>
    <property type="match status" value="1"/>
</dbReference>
<dbReference type="Pfam" id="PF00028">
    <property type="entry name" value="Cadherin"/>
    <property type="match status" value="33"/>
</dbReference>
<dbReference type="Pfam" id="PF25374">
    <property type="entry name" value="Cadherin_FAT4_N"/>
    <property type="match status" value="1"/>
</dbReference>
<dbReference type="Pfam" id="PF00008">
    <property type="entry name" value="EGF"/>
    <property type="match status" value="1"/>
</dbReference>
<dbReference type="Pfam" id="PF07645">
    <property type="entry name" value="EGF_CA"/>
    <property type="match status" value="2"/>
</dbReference>
<dbReference type="Pfam" id="PF12661">
    <property type="entry name" value="hEGF"/>
    <property type="match status" value="1"/>
</dbReference>
<dbReference type="Pfam" id="PF02210">
    <property type="entry name" value="Laminin_G_2"/>
    <property type="match status" value="2"/>
</dbReference>
<dbReference type="PRINTS" id="PR00205">
    <property type="entry name" value="CADHERIN"/>
</dbReference>
<dbReference type="SMART" id="SM00112">
    <property type="entry name" value="CA"/>
    <property type="match status" value="34"/>
</dbReference>
<dbReference type="SMART" id="SM00181">
    <property type="entry name" value="EGF"/>
    <property type="match status" value="6"/>
</dbReference>
<dbReference type="SMART" id="SM00179">
    <property type="entry name" value="EGF_CA"/>
    <property type="match status" value="5"/>
</dbReference>
<dbReference type="SMART" id="SM00282">
    <property type="entry name" value="LamG"/>
    <property type="match status" value="2"/>
</dbReference>
<dbReference type="SUPFAM" id="SSF49313">
    <property type="entry name" value="Cadherin-like"/>
    <property type="match status" value="34"/>
</dbReference>
<dbReference type="SUPFAM" id="SSF49899">
    <property type="entry name" value="Concanavalin A-like lectins/glucanases"/>
    <property type="match status" value="2"/>
</dbReference>
<dbReference type="SUPFAM" id="SSF57196">
    <property type="entry name" value="EGF/Laminin"/>
    <property type="match status" value="1"/>
</dbReference>
<dbReference type="SUPFAM" id="SSF57184">
    <property type="entry name" value="Growth factor receptor domain"/>
    <property type="match status" value="1"/>
</dbReference>
<dbReference type="PROSITE" id="PS00010">
    <property type="entry name" value="ASX_HYDROXYL"/>
    <property type="match status" value="2"/>
</dbReference>
<dbReference type="PROSITE" id="PS00232">
    <property type="entry name" value="CADHERIN_1"/>
    <property type="match status" value="23"/>
</dbReference>
<dbReference type="PROSITE" id="PS50268">
    <property type="entry name" value="CADHERIN_2"/>
    <property type="match status" value="34"/>
</dbReference>
<dbReference type="PROSITE" id="PS00022">
    <property type="entry name" value="EGF_1"/>
    <property type="match status" value="7"/>
</dbReference>
<dbReference type="PROSITE" id="PS01186">
    <property type="entry name" value="EGF_2"/>
    <property type="match status" value="3"/>
</dbReference>
<dbReference type="PROSITE" id="PS50026">
    <property type="entry name" value="EGF_3"/>
    <property type="match status" value="6"/>
</dbReference>
<dbReference type="PROSITE" id="PS01187">
    <property type="entry name" value="EGF_CA"/>
    <property type="match status" value="2"/>
</dbReference>
<dbReference type="PROSITE" id="PS50025">
    <property type="entry name" value="LAM_G_DOMAIN"/>
    <property type="match status" value="2"/>
</dbReference>